<protein>
    <recommendedName>
        <fullName>3-hydroxy-3-methylglutaryl-coenzyme A reductase 1</fullName>
        <shortName>HMG-CoA reductase 1</shortName>
        <ecNumber>1.1.1.34</ecNumber>
    </recommendedName>
</protein>
<sequence>MLFAPPNLETKELFWIIYILILIPKVFAKVMSVRELFPFFKWGFNIRRSNFLVPILSNNVIVTGEEAVQYEKPLPYIPQHNQQQQQKQQPSQDYIQQPQNDNNINSGKEQEQQQQQQQQQQQTPDITNQPTKTNKKIPIKELSNEEILIKLEKGEVLAYRLENELGDCSRAVEIRRMLLEKQLSKKIEPIPHEGFDFAKVQGQCCENVIGYVPIPVGTAGPIQLNGQLVTIPMATTEGCLVASTHRGCKAITESGGAKCTITSRGMTRAPVVRFSDIVKASEFVSWINDTDNYQALKAVFDSTSRFARLSAIKCTIAGRSVYIRFKCDTGDAMGMNMVSKGVEAVLEHLKIIFDDMTLLSISGNMCTDKKPSSINWTEGRGRSVVCEAMITGDVVQRVLKTNVQALVDLNIAKNLIGSAMAGSIGGFNAHASNIVTAIFLATGQDCAQNVESSNCITQMEACNDGQDLYITVTMPSIEVGTVGGGTSLPAQSACLDIIGVKGSSSSKPGANADQLAKTIASAVMAGELSLMSALSAGHLMKSHLQYNRAKTN</sequence>
<accession>P34135</accession>
<accession>Q55CJ2</accession>
<comment type="function">
    <text>This transmembrane glycoprotein is involved in the control of cholesterol biosynthesis. It is the rate-limiting enzyme of the sterol biosynthesis.</text>
</comment>
<comment type="catalytic activity">
    <reaction evidence="3">
        <text>(R)-mevalonate + 2 NADP(+) + CoA = (3S)-3-hydroxy-3-methylglutaryl-CoA + 2 NADPH + 2 H(+)</text>
        <dbReference type="Rhea" id="RHEA:15989"/>
        <dbReference type="ChEBI" id="CHEBI:15378"/>
        <dbReference type="ChEBI" id="CHEBI:36464"/>
        <dbReference type="ChEBI" id="CHEBI:43074"/>
        <dbReference type="ChEBI" id="CHEBI:57287"/>
        <dbReference type="ChEBI" id="CHEBI:57783"/>
        <dbReference type="ChEBI" id="CHEBI:58349"/>
        <dbReference type="EC" id="1.1.1.34"/>
    </reaction>
</comment>
<comment type="pathway">
    <text>Metabolic intermediate biosynthesis; (R)-mevalonate biosynthesis; (R)-mevalonate from acetyl-CoA: step 3/3.</text>
</comment>
<comment type="subcellular location">
    <subcellularLocation>
        <location>Endoplasmic reticulum membrane</location>
    </subcellularLocation>
</comment>
<comment type="similarity">
    <text evidence="5">Belongs to the HMG-CoA reductase family.</text>
</comment>
<feature type="chain" id="PRO_0000114427" description="3-hydroxy-3-methylglutaryl-coenzyme A reductase 1">
    <location>
        <begin position="1"/>
        <end position="552"/>
    </location>
</feature>
<feature type="region of interest" description="Disordered" evidence="4">
    <location>
        <begin position="79"/>
        <end position="138"/>
    </location>
</feature>
<feature type="compositionally biased region" description="Low complexity" evidence="4">
    <location>
        <begin position="79"/>
        <end position="99"/>
    </location>
</feature>
<feature type="compositionally biased region" description="Low complexity" evidence="4">
    <location>
        <begin position="112"/>
        <end position="122"/>
    </location>
</feature>
<feature type="compositionally biased region" description="Polar residues" evidence="4">
    <location>
        <begin position="123"/>
        <end position="132"/>
    </location>
</feature>
<feature type="active site" description="Charge relay system" evidence="1">
    <location>
        <position position="237"/>
    </location>
</feature>
<feature type="active site" description="Charge relay system" evidence="1">
    <location>
        <position position="369"/>
    </location>
</feature>
<feature type="active site" description="Charge relay system" evidence="1">
    <location>
        <position position="445"/>
    </location>
</feature>
<feature type="active site" description="Proton donor" evidence="3">
    <location>
        <position position="543"/>
    </location>
</feature>
<feature type="glycosylation site" description="N-linked (GlcNAc...) asparagine" evidence="2">
    <location>
        <position position="288"/>
    </location>
</feature>
<feature type="glycosylation site" description="N-linked (GlcNAc...) asparagine" evidence="2">
    <location>
        <position position="375"/>
    </location>
</feature>
<proteinExistence type="evidence at transcript level"/>
<name>HMDH1_DICDI</name>
<keyword id="KW-0152">Cholesterol biosynthesis</keyword>
<keyword id="KW-0153">Cholesterol metabolism</keyword>
<keyword id="KW-0256">Endoplasmic reticulum</keyword>
<keyword id="KW-0325">Glycoprotein</keyword>
<keyword id="KW-0444">Lipid biosynthesis</keyword>
<keyword id="KW-0443">Lipid metabolism</keyword>
<keyword id="KW-0472">Membrane</keyword>
<keyword id="KW-0521">NADP</keyword>
<keyword id="KW-0560">Oxidoreductase</keyword>
<keyword id="KW-1185">Reference proteome</keyword>
<keyword id="KW-0752">Steroid biosynthesis</keyword>
<keyword id="KW-0753">Steroid metabolism</keyword>
<keyword id="KW-0756">Sterol biosynthesis</keyword>
<keyword id="KW-1207">Sterol metabolism</keyword>
<gene>
    <name type="primary">hmgA</name>
    <name type="ORF">DDB_G0269142</name>
</gene>
<reference key="1">
    <citation type="submission" date="1993-06" db="EMBL/GenBank/DDBJ databases">
        <title>The dictyostelium HMGCoA reductase genes.</title>
        <authorList>
            <person name="De Lozanne A."/>
        </authorList>
    </citation>
    <scope>NUCLEOTIDE SEQUENCE [MRNA]</scope>
    <source>
        <strain>AX3</strain>
    </source>
</reference>
<reference key="2">
    <citation type="journal article" date="2005" name="Nature">
        <title>The genome of the social amoeba Dictyostelium discoideum.</title>
        <authorList>
            <person name="Eichinger L."/>
            <person name="Pachebat J.A."/>
            <person name="Gloeckner G."/>
            <person name="Rajandream M.A."/>
            <person name="Sucgang R."/>
            <person name="Berriman M."/>
            <person name="Song J."/>
            <person name="Olsen R."/>
            <person name="Szafranski K."/>
            <person name="Xu Q."/>
            <person name="Tunggal B."/>
            <person name="Kummerfeld S."/>
            <person name="Madera M."/>
            <person name="Konfortov B.A."/>
            <person name="Rivero F."/>
            <person name="Bankier A.T."/>
            <person name="Lehmann R."/>
            <person name="Hamlin N."/>
            <person name="Davies R."/>
            <person name="Gaudet P."/>
            <person name="Fey P."/>
            <person name="Pilcher K."/>
            <person name="Chen G."/>
            <person name="Saunders D."/>
            <person name="Sodergren E.J."/>
            <person name="Davis P."/>
            <person name="Kerhornou A."/>
            <person name="Nie X."/>
            <person name="Hall N."/>
            <person name="Anjard C."/>
            <person name="Hemphill L."/>
            <person name="Bason N."/>
            <person name="Farbrother P."/>
            <person name="Desany B."/>
            <person name="Just E."/>
            <person name="Morio T."/>
            <person name="Rost R."/>
            <person name="Churcher C.M."/>
            <person name="Cooper J."/>
            <person name="Haydock S."/>
            <person name="van Driessche N."/>
            <person name="Cronin A."/>
            <person name="Goodhead I."/>
            <person name="Muzny D.M."/>
            <person name="Mourier T."/>
            <person name="Pain A."/>
            <person name="Lu M."/>
            <person name="Harper D."/>
            <person name="Lindsay R."/>
            <person name="Hauser H."/>
            <person name="James K.D."/>
            <person name="Quiles M."/>
            <person name="Madan Babu M."/>
            <person name="Saito T."/>
            <person name="Buchrieser C."/>
            <person name="Wardroper A."/>
            <person name="Felder M."/>
            <person name="Thangavelu M."/>
            <person name="Johnson D."/>
            <person name="Knights A."/>
            <person name="Loulseged H."/>
            <person name="Mungall K.L."/>
            <person name="Oliver K."/>
            <person name="Price C."/>
            <person name="Quail M.A."/>
            <person name="Urushihara H."/>
            <person name="Hernandez J."/>
            <person name="Rabbinowitsch E."/>
            <person name="Steffen D."/>
            <person name="Sanders M."/>
            <person name="Ma J."/>
            <person name="Kohara Y."/>
            <person name="Sharp S."/>
            <person name="Simmonds M.N."/>
            <person name="Spiegler S."/>
            <person name="Tivey A."/>
            <person name="Sugano S."/>
            <person name="White B."/>
            <person name="Walker D."/>
            <person name="Woodward J.R."/>
            <person name="Winckler T."/>
            <person name="Tanaka Y."/>
            <person name="Shaulsky G."/>
            <person name="Schleicher M."/>
            <person name="Weinstock G.M."/>
            <person name="Rosenthal A."/>
            <person name="Cox E.C."/>
            <person name="Chisholm R.L."/>
            <person name="Gibbs R.A."/>
            <person name="Loomis W.F."/>
            <person name="Platzer M."/>
            <person name="Kay R.R."/>
            <person name="Williams J.G."/>
            <person name="Dear P.H."/>
            <person name="Noegel A.A."/>
            <person name="Barrell B.G."/>
            <person name="Kuspa A."/>
        </authorList>
    </citation>
    <scope>NUCLEOTIDE SEQUENCE [LARGE SCALE GENOMIC DNA]</scope>
    <source>
        <strain>AX4</strain>
    </source>
</reference>
<dbReference type="EC" id="1.1.1.34"/>
<dbReference type="EMBL" id="L19349">
    <property type="protein sequence ID" value="AAA33214.1"/>
    <property type="molecule type" value="mRNA"/>
</dbReference>
<dbReference type="EMBL" id="AAFI02000005">
    <property type="protein sequence ID" value="EAL71921.1"/>
    <property type="molecule type" value="Genomic_DNA"/>
</dbReference>
<dbReference type="RefSeq" id="XP_646489.1">
    <property type="nucleotide sequence ID" value="XM_641397.1"/>
</dbReference>
<dbReference type="SMR" id="P34135"/>
<dbReference type="FunCoup" id="P34135">
    <property type="interactions" value="20"/>
</dbReference>
<dbReference type="STRING" id="44689.P34135"/>
<dbReference type="GlyCosmos" id="P34135">
    <property type="glycosylation" value="2 sites, No reported glycans"/>
</dbReference>
<dbReference type="GlyGen" id="P34135">
    <property type="glycosylation" value="2 sites"/>
</dbReference>
<dbReference type="PaxDb" id="44689-DDB0191125"/>
<dbReference type="EnsemblProtists" id="EAL71921">
    <property type="protein sequence ID" value="EAL71921"/>
    <property type="gene ID" value="DDB_G0269142"/>
</dbReference>
<dbReference type="GeneID" id="8617451"/>
<dbReference type="KEGG" id="ddi:DDB_G0269142"/>
<dbReference type="dictyBase" id="DDB_G0269142">
    <property type="gene designation" value="hmgA"/>
</dbReference>
<dbReference type="VEuPathDB" id="AmoebaDB:DDB_G0269142"/>
<dbReference type="eggNOG" id="KOG2480">
    <property type="taxonomic scope" value="Eukaryota"/>
</dbReference>
<dbReference type="HOGENOM" id="CLU_001734_2_2_1"/>
<dbReference type="InParanoid" id="P34135"/>
<dbReference type="OMA" id="FKWGFNI"/>
<dbReference type="PhylomeDB" id="P34135"/>
<dbReference type="Reactome" id="R-DDI-191273">
    <property type="pathway name" value="Cholesterol biosynthesis"/>
</dbReference>
<dbReference type="UniPathway" id="UPA00058">
    <property type="reaction ID" value="UER00103"/>
</dbReference>
<dbReference type="PRO" id="PR:P34135"/>
<dbReference type="Proteomes" id="UP000002195">
    <property type="component" value="Chromosome 1"/>
</dbReference>
<dbReference type="GO" id="GO:0005789">
    <property type="term" value="C:endoplasmic reticulum membrane"/>
    <property type="evidence" value="ECO:0000318"/>
    <property type="project" value="GO_Central"/>
</dbReference>
<dbReference type="GO" id="GO:0005778">
    <property type="term" value="C:peroxisomal membrane"/>
    <property type="evidence" value="ECO:0000318"/>
    <property type="project" value="GO_Central"/>
</dbReference>
<dbReference type="GO" id="GO:0004420">
    <property type="term" value="F:hydroxymethylglutaryl-CoA reductase (NADPH) activity"/>
    <property type="evidence" value="ECO:0000318"/>
    <property type="project" value="GO_Central"/>
</dbReference>
<dbReference type="GO" id="GO:0006695">
    <property type="term" value="P:cholesterol biosynthetic process"/>
    <property type="evidence" value="ECO:0007669"/>
    <property type="project" value="UniProtKB-KW"/>
</dbReference>
<dbReference type="GO" id="GO:0015936">
    <property type="term" value="P:coenzyme A metabolic process"/>
    <property type="evidence" value="ECO:0007669"/>
    <property type="project" value="InterPro"/>
</dbReference>
<dbReference type="GO" id="GO:0008299">
    <property type="term" value="P:isoprenoid biosynthetic process"/>
    <property type="evidence" value="ECO:0000318"/>
    <property type="project" value="GO_Central"/>
</dbReference>
<dbReference type="GO" id="GO:0016126">
    <property type="term" value="P:sterol biosynthetic process"/>
    <property type="evidence" value="ECO:0000318"/>
    <property type="project" value="GO_Central"/>
</dbReference>
<dbReference type="CDD" id="cd00643">
    <property type="entry name" value="HMG-CoA_reductase_classI"/>
    <property type="match status" value="1"/>
</dbReference>
<dbReference type="FunFam" id="1.10.3270.10:FF:000003">
    <property type="entry name" value="3-hydroxy-3-methylglutaryl coenzyme A reductase"/>
    <property type="match status" value="1"/>
</dbReference>
<dbReference type="FunFam" id="3.30.70.420:FF:000001">
    <property type="entry name" value="3-hydroxy-3-methylglutaryl coenzyme A reductase"/>
    <property type="match status" value="1"/>
</dbReference>
<dbReference type="FunFam" id="3.90.770.10:FF:000001">
    <property type="entry name" value="3-hydroxy-3-methylglutaryl coenzyme A reductase"/>
    <property type="match status" value="1"/>
</dbReference>
<dbReference type="Gene3D" id="3.90.770.10">
    <property type="entry name" value="3-hydroxy-3-methylglutaryl-coenzyme A Reductase, Chain A, domain 2"/>
    <property type="match status" value="1"/>
</dbReference>
<dbReference type="Gene3D" id="1.10.3270.10">
    <property type="entry name" value="HMGR, N-terminal domain"/>
    <property type="match status" value="1"/>
</dbReference>
<dbReference type="Gene3D" id="3.30.70.420">
    <property type="entry name" value="Hydroxymethylglutaryl-CoA reductase, class I/II, NAD/NADP-binding domain"/>
    <property type="match status" value="1"/>
</dbReference>
<dbReference type="InterPro" id="IPR002202">
    <property type="entry name" value="HMG_CoA_Rdtase"/>
</dbReference>
<dbReference type="InterPro" id="IPR023074">
    <property type="entry name" value="HMG_CoA_Rdtase_cat_sf"/>
</dbReference>
<dbReference type="InterPro" id="IPR023076">
    <property type="entry name" value="HMG_CoA_Rdtase_CS"/>
</dbReference>
<dbReference type="InterPro" id="IPR004554">
    <property type="entry name" value="HMG_CoA_Rdtase_eu_arc"/>
</dbReference>
<dbReference type="InterPro" id="IPR023282">
    <property type="entry name" value="HMG_CoA_Rdtase_N"/>
</dbReference>
<dbReference type="InterPro" id="IPR009023">
    <property type="entry name" value="HMG_CoA_Rdtase_NAD(P)-bd_sf"/>
</dbReference>
<dbReference type="InterPro" id="IPR009029">
    <property type="entry name" value="HMG_CoA_Rdtase_sub-bd_dom_sf"/>
</dbReference>
<dbReference type="NCBIfam" id="TIGR00533">
    <property type="entry name" value="HMG_CoA_R_NADP"/>
    <property type="match status" value="1"/>
</dbReference>
<dbReference type="PANTHER" id="PTHR10572">
    <property type="entry name" value="3-HYDROXY-3-METHYLGLUTARYL-COENZYME A REDUCTASE"/>
    <property type="match status" value="1"/>
</dbReference>
<dbReference type="PANTHER" id="PTHR10572:SF52">
    <property type="entry name" value="3-HYDROXY-3-METHYLGLUTARYL-COENZYME A REDUCTASE 1"/>
    <property type="match status" value="1"/>
</dbReference>
<dbReference type="Pfam" id="PF00368">
    <property type="entry name" value="HMG-CoA_red"/>
    <property type="match status" value="1"/>
</dbReference>
<dbReference type="PRINTS" id="PR00071">
    <property type="entry name" value="HMGCOARDTASE"/>
</dbReference>
<dbReference type="SUPFAM" id="SSF81995">
    <property type="entry name" value="beta-sandwich domain of Sec23/24"/>
    <property type="match status" value="1"/>
</dbReference>
<dbReference type="SUPFAM" id="SSF55035">
    <property type="entry name" value="NAD-binding domain of HMG-CoA reductase"/>
    <property type="match status" value="1"/>
</dbReference>
<dbReference type="SUPFAM" id="SSF56542">
    <property type="entry name" value="Substrate-binding domain of HMG-CoA reductase"/>
    <property type="match status" value="1"/>
</dbReference>
<dbReference type="PROSITE" id="PS00066">
    <property type="entry name" value="HMG_COA_REDUCTASE_1"/>
    <property type="match status" value="1"/>
</dbReference>
<dbReference type="PROSITE" id="PS00318">
    <property type="entry name" value="HMG_COA_REDUCTASE_2"/>
    <property type="match status" value="1"/>
</dbReference>
<dbReference type="PROSITE" id="PS01192">
    <property type="entry name" value="HMG_COA_REDUCTASE_3"/>
    <property type="match status" value="1"/>
</dbReference>
<dbReference type="PROSITE" id="PS50065">
    <property type="entry name" value="HMG_COA_REDUCTASE_4"/>
    <property type="match status" value="1"/>
</dbReference>
<evidence type="ECO:0000250" key="1"/>
<evidence type="ECO:0000255" key="2"/>
<evidence type="ECO:0000255" key="3">
    <source>
        <dbReference type="PROSITE-ProRule" id="PRU10003"/>
    </source>
</evidence>
<evidence type="ECO:0000256" key="4">
    <source>
        <dbReference type="SAM" id="MobiDB-lite"/>
    </source>
</evidence>
<evidence type="ECO:0000305" key="5"/>
<organism>
    <name type="scientific">Dictyostelium discoideum</name>
    <name type="common">Social amoeba</name>
    <dbReference type="NCBI Taxonomy" id="44689"/>
    <lineage>
        <taxon>Eukaryota</taxon>
        <taxon>Amoebozoa</taxon>
        <taxon>Evosea</taxon>
        <taxon>Eumycetozoa</taxon>
        <taxon>Dictyostelia</taxon>
        <taxon>Dictyosteliales</taxon>
        <taxon>Dictyosteliaceae</taxon>
        <taxon>Dictyostelium</taxon>
    </lineage>
</organism>